<proteinExistence type="inferred from homology"/>
<protein>
    <recommendedName>
        <fullName evidence="1">ATP synthase subunit beta</fullName>
        <ecNumber evidence="1">7.1.2.2</ecNumber>
    </recommendedName>
    <alternativeName>
        <fullName evidence="1">ATP synthase F1 sector subunit beta</fullName>
    </alternativeName>
    <alternativeName>
        <fullName evidence="1">F-ATPase subunit beta</fullName>
    </alternativeName>
</protein>
<evidence type="ECO:0000255" key="1">
    <source>
        <dbReference type="HAMAP-Rule" id="MF_01347"/>
    </source>
</evidence>
<feature type="chain" id="PRO_1000166601" description="ATP synthase subunit beta">
    <location>
        <begin position="1"/>
        <end position="483"/>
    </location>
</feature>
<feature type="binding site" evidence="1">
    <location>
        <begin position="169"/>
        <end position="176"/>
    </location>
    <ligand>
        <name>ATP</name>
        <dbReference type="ChEBI" id="CHEBI:30616"/>
    </ligand>
</feature>
<accession>C1AVZ9</accession>
<comment type="function">
    <text evidence="1">Produces ATP from ADP in the presence of a proton gradient across the membrane. The catalytic sites are hosted primarily by the beta subunits.</text>
</comment>
<comment type="catalytic activity">
    <reaction evidence="1">
        <text>ATP + H2O + 4 H(+)(in) = ADP + phosphate + 5 H(+)(out)</text>
        <dbReference type="Rhea" id="RHEA:57720"/>
        <dbReference type="ChEBI" id="CHEBI:15377"/>
        <dbReference type="ChEBI" id="CHEBI:15378"/>
        <dbReference type="ChEBI" id="CHEBI:30616"/>
        <dbReference type="ChEBI" id="CHEBI:43474"/>
        <dbReference type="ChEBI" id="CHEBI:456216"/>
        <dbReference type="EC" id="7.1.2.2"/>
    </reaction>
</comment>
<comment type="subunit">
    <text evidence="1">F-type ATPases have 2 components, CF(1) - the catalytic core - and CF(0) - the membrane proton channel. CF(1) has five subunits: alpha(3), beta(3), gamma(1), delta(1), epsilon(1). CF(0) has three main subunits: a(1), b(2) and c(9-12). The alpha and beta chains form an alternating ring which encloses part of the gamma chain. CF(1) is attached to CF(0) by a central stalk formed by the gamma and epsilon chains, while a peripheral stalk is formed by the delta and b chains.</text>
</comment>
<comment type="subcellular location">
    <subcellularLocation>
        <location evidence="1">Cell membrane</location>
        <topology evidence="1">Peripheral membrane protein</topology>
    </subcellularLocation>
</comment>
<comment type="similarity">
    <text evidence="1">Belongs to the ATPase alpha/beta chains family.</text>
</comment>
<keyword id="KW-0066">ATP synthesis</keyword>
<keyword id="KW-0067">ATP-binding</keyword>
<keyword id="KW-1003">Cell membrane</keyword>
<keyword id="KW-0139">CF(1)</keyword>
<keyword id="KW-0375">Hydrogen ion transport</keyword>
<keyword id="KW-0406">Ion transport</keyword>
<keyword id="KW-0472">Membrane</keyword>
<keyword id="KW-0547">Nucleotide-binding</keyword>
<keyword id="KW-1278">Translocase</keyword>
<keyword id="KW-0813">Transport</keyword>
<name>ATPB_RHOOB</name>
<gene>
    <name evidence="1" type="primary">atpD</name>
    <name type="ordered locus">ROP_11820</name>
</gene>
<organism>
    <name type="scientific">Rhodococcus opacus (strain B4)</name>
    <dbReference type="NCBI Taxonomy" id="632772"/>
    <lineage>
        <taxon>Bacteria</taxon>
        <taxon>Bacillati</taxon>
        <taxon>Actinomycetota</taxon>
        <taxon>Actinomycetes</taxon>
        <taxon>Mycobacteriales</taxon>
        <taxon>Nocardiaceae</taxon>
        <taxon>Rhodococcus</taxon>
    </lineage>
</organism>
<reference key="1">
    <citation type="submission" date="2009-03" db="EMBL/GenBank/DDBJ databases">
        <title>Comparison of the complete genome sequences of Rhodococcus erythropolis PR4 and Rhodococcus opacus B4.</title>
        <authorList>
            <person name="Takarada H."/>
            <person name="Sekine M."/>
            <person name="Hosoyama A."/>
            <person name="Yamada R."/>
            <person name="Fujisawa T."/>
            <person name="Omata S."/>
            <person name="Shimizu A."/>
            <person name="Tsukatani N."/>
            <person name="Tanikawa S."/>
            <person name="Fujita N."/>
            <person name="Harayama S."/>
        </authorList>
    </citation>
    <scope>NUCLEOTIDE SEQUENCE [LARGE SCALE GENOMIC DNA]</scope>
    <source>
        <strain>B4</strain>
    </source>
</reference>
<dbReference type="EC" id="7.1.2.2" evidence="1"/>
<dbReference type="EMBL" id="AP011115">
    <property type="protein sequence ID" value="BAH49429.1"/>
    <property type="molecule type" value="Genomic_DNA"/>
</dbReference>
<dbReference type="RefSeq" id="WP_012688407.1">
    <property type="nucleotide sequence ID" value="NC_012522.1"/>
</dbReference>
<dbReference type="SMR" id="C1AVZ9"/>
<dbReference type="STRING" id="632772.ROP_11820"/>
<dbReference type="KEGG" id="rop:ROP_11820"/>
<dbReference type="PATRIC" id="fig|632772.20.peg.1252"/>
<dbReference type="HOGENOM" id="CLU_022398_0_2_11"/>
<dbReference type="OrthoDB" id="9801639at2"/>
<dbReference type="Proteomes" id="UP000002212">
    <property type="component" value="Chromosome"/>
</dbReference>
<dbReference type="GO" id="GO:0005886">
    <property type="term" value="C:plasma membrane"/>
    <property type="evidence" value="ECO:0007669"/>
    <property type="project" value="UniProtKB-SubCell"/>
</dbReference>
<dbReference type="GO" id="GO:0045259">
    <property type="term" value="C:proton-transporting ATP synthase complex"/>
    <property type="evidence" value="ECO:0007669"/>
    <property type="project" value="UniProtKB-KW"/>
</dbReference>
<dbReference type="GO" id="GO:0005524">
    <property type="term" value="F:ATP binding"/>
    <property type="evidence" value="ECO:0007669"/>
    <property type="project" value="UniProtKB-UniRule"/>
</dbReference>
<dbReference type="GO" id="GO:0016887">
    <property type="term" value="F:ATP hydrolysis activity"/>
    <property type="evidence" value="ECO:0007669"/>
    <property type="project" value="InterPro"/>
</dbReference>
<dbReference type="GO" id="GO:0046933">
    <property type="term" value="F:proton-transporting ATP synthase activity, rotational mechanism"/>
    <property type="evidence" value="ECO:0007669"/>
    <property type="project" value="UniProtKB-UniRule"/>
</dbReference>
<dbReference type="CDD" id="cd18110">
    <property type="entry name" value="ATP-synt_F1_beta_C"/>
    <property type="match status" value="1"/>
</dbReference>
<dbReference type="CDD" id="cd18115">
    <property type="entry name" value="ATP-synt_F1_beta_N"/>
    <property type="match status" value="1"/>
</dbReference>
<dbReference type="CDD" id="cd01133">
    <property type="entry name" value="F1-ATPase_beta_CD"/>
    <property type="match status" value="1"/>
</dbReference>
<dbReference type="FunFam" id="1.10.1140.10:FF:000001">
    <property type="entry name" value="ATP synthase subunit beta"/>
    <property type="match status" value="1"/>
</dbReference>
<dbReference type="FunFam" id="2.40.10.170:FF:000005">
    <property type="entry name" value="ATP synthase subunit beta"/>
    <property type="match status" value="1"/>
</dbReference>
<dbReference type="FunFam" id="3.40.50.300:FF:000004">
    <property type="entry name" value="ATP synthase subunit beta"/>
    <property type="match status" value="1"/>
</dbReference>
<dbReference type="Gene3D" id="2.40.10.170">
    <property type="match status" value="1"/>
</dbReference>
<dbReference type="Gene3D" id="1.10.1140.10">
    <property type="entry name" value="Bovine Mitochondrial F1-atpase, Atp Synthase Beta Chain, Chain D, domain 3"/>
    <property type="match status" value="1"/>
</dbReference>
<dbReference type="Gene3D" id="3.40.50.300">
    <property type="entry name" value="P-loop containing nucleotide triphosphate hydrolases"/>
    <property type="match status" value="1"/>
</dbReference>
<dbReference type="HAMAP" id="MF_01347">
    <property type="entry name" value="ATP_synth_beta_bact"/>
    <property type="match status" value="1"/>
</dbReference>
<dbReference type="InterPro" id="IPR003593">
    <property type="entry name" value="AAA+_ATPase"/>
</dbReference>
<dbReference type="InterPro" id="IPR055190">
    <property type="entry name" value="ATP-synt_VA_C"/>
</dbReference>
<dbReference type="InterPro" id="IPR005722">
    <property type="entry name" value="ATP_synth_F1_bsu"/>
</dbReference>
<dbReference type="InterPro" id="IPR020003">
    <property type="entry name" value="ATPase_a/bsu_AS"/>
</dbReference>
<dbReference type="InterPro" id="IPR050053">
    <property type="entry name" value="ATPase_alpha/beta_chains"/>
</dbReference>
<dbReference type="InterPro" id="IPR004100">
    <property type="entry name" value="ATPase_F1/V1/A1_a/bsu_N"/>
</dbReference>
<dbReference type="InterPro" id="IPR036121">
    <property type="entry name" value="ATPase_F1/V1/A1_a/bsu_N_sf"/>
</dbReference>
<dbReference type="InterPro" id="IPR000194">
    <property type="entry name" value="ATPase_F1/V1/A1_a/bsu_nucl-bd"/>
</dbReference>
<dbReference type="InterPro" id="IPR024034">
    <property type="entry name" value="ATPase_F1/V1_b/a_C"/>
</dbReference>
<dbReference type="InterPro" id="IPR027417">
    <property type="entry name" value="P-loop_NTPase"/>
</dbReference>
<dbReference type="NCBIfam" id="TIGR01039">
    <property type="entry name" value="atpD"/>
    <property type="match status" value="1"/>
</dbReference>
<dbReference type="PANTHER" id="PTHR15184">
    <property type="entry name" value="ATP SYNTHASE"/>
    <property type="match status" value="1"/>
</dbReference>
<dbReference type="PANTHER" id="PTHR15184:SF71">
    <property type="entry name" value="ATP SYNTHASE SUBUNIT BETA, MITOCHONDRIAL"/>
    <property type="match status" value="1"/>
</dbReference>
<dbReference type="Pfam" id="PF00006">
    <property type="entry name" value="ATP-synt_ab"/>
    <property type="match status" value="1"/>
</dbReference>
<dbReference type="Pfam" id="PF02874">
    <property type="entry name" value="ATP-synt_ab_N"/>
    <property type="match status" value="1"/>
</dbReference>
<dbReference type="Pfam" id="PF22919">
    <property type="entry name" value="ATP-synt_VA_C"/>
    <property type="match status" value="1"/>
</dbReference>
<dbReference type="SMART" id="SM00382">
    <property type="entry name" value="AAA"/>
    <property type="match status" value="1"/>
</dbReference>
<dbReference type="SUPFAM" id="SSF47917">
    <property type="entry name" value="C-terminal domain of alpha and beta subunits of F1 ATP synthase"/>
    <property type="match status" value="1"/>
</dbReference>
<dbReference type="SUPFAM" id="SSF50615">
    <property type="entry name" value="N-terminal domain of alpha and beta subunits of F1 ATP synthase"/>
    <property type="match status" value="1"/>
</dbReference>
<dbReference type="SUPFAM" id="SSF52540">
    <property type="entry name" value="P-loop containing nucleoside triphosphate hydrolases"/>
    <property type="match status" value="1"/>
</dbReference>
<dbReference type="PROSITE" id="PS00152">
    <property type="entry name" value="ATPASE_ALPHA_BETA"/>
    <property type="match status" value="1"/>
</dbReference>
<sequence>MTAAVTENNGAGSDSSVAGRVVRVIGPVVDVEFPRGAIPELFNALHAEITLPSVAKTLTLEVAQHLGDNLVRTVSMQPTDGLIRGTSVSDTGKPISVPVGDVVKGHVFNALGDCLDAPGTGRDGEQWGIHRKPPAFDQLEGKTEILETGIKVIDLLTPYVKGGKIGLFGGAGVGKTVLIQEMITRIAREFSGTSVFAGVGERTREGTDLHLEMEEMGVLQDTALVFGQMDEPPGTRMRVALSALTMAEYFRDVQGQDVLLFIDNIFRFTQAGSEVSTLLGRMPSAVGYQPTLADEMGELQERITSTRGRSITSLQAIYVPADDYTDPAPATTFAHLDATTELSRPISQMGIYPAVDPLTSTSRILEPGIVGAEHFRVANEVKRILQKYKELQDIIAILGMDELQEEDKVLVGRARRLQKFLGQNFIVAEKFTGEPGSVVPLRDTIEAFDRICKGEFDHLPEQAFNSCGGLDDVEAAAKKIAGK</sequence>